<accession>A0AJB3</accession>
<sequence>MLENLATEERNKKTIDLDKLSPKEILMVMNEEDAGVTTAIKKELSKIEKIVNGVTESFRKGGRLIYLGAGTSGRLGVLDAAECVPTFGVSKEQVIGLISGGEKAFVSAVEGAEDSLSLGKQDLEKINLVKDDFVIGIAASGRTPYVIGALDYARLIGAKTAAISCNANAEISAHADIQVEIVTGAEVLTGSTRLKAGTAQKLVLNMISTTSMVGIGKVYKNLMVDVLPTNKKLEERSKRIIMEATDVDYETASKFYEEAEKHVKVAIVMILTNSHKEEALNNLKKANGFVRNTIQK</sequence>
<comment type="function">
    <text evidence="1">Specifically catalyzes the cleavage of the D-lactyl ether substituent of MurNAc 6-phosphate, producing GlcNAc 6-phosphate and D-lactate.</text>
</comment>
<comment type="catalytic activity">
    <reaction evidence="1">
        <text>N-acetyl-D-muramate 6-phosphate + H2O = N-acetyl-D-glucosamine 6-phosphate + (R)-lactate</text>
        <dbReference type="Rhea" id="RHEA:26410"/>
        <dbReference type="ChEBI" id="CHEBI:15377"/>
        <dbReference type="ChEBI" id="CHEBI:16004"/>
        <dbReference type="ChEBI" id="CHEBI:57513"/>
        <dbReference type="ChEBI" id="CHEBI:58722"/>
        <dbReference type="EC" id="4.2.1.126"/>
    </reaction>
</comment>
<comment type="pathway">
    <text evidence="1">Amino-sugar metabolism; N-acetylmuramate degradation.</text>
</comment>
<comment type="subunit">
    <text evidence="1">Homodimer.</text>
</comment>
<comment type="miscellaneous">
    <text evidence="1">A lyase-type mechanism (elimination/hydration) is suggested for the cleavage of the lactyl ether bond of MurNAc 6-phosphate, with the formation of an alpha,beta-unsaturated aldehyde intermediate with (E)-stereochemistry, followed by the syn addition of water to give product.</text>
</comment>
<comment type="similarity">
    <text evidence="1">Belongs to the GCKR-like family. MurNAc-6-P etherase subfamily.</text>
</comment>
<proteinExistence type="inferred from homology"/>
<dbReference type="EC" id="4.2.1.126" evidence="1"/>
<dbReference type="EMBL" id="AM263198">
    <property type="protein sequence ID" value="CAK21095.1"/>
    <property type="molecule type" value="Genomic_DNA"/>
</dbReference>
<dbReference type="RefSeq" id="WP_011702459.1">
    <property type="nucleotide sequence ID" value="NC_008555.1"/>
</dbReference>
<dbReference type="SMR" id="A0AJB3"/>
<dbReference type="STRING" id="386043.lwe1677"/>
<dbReference type="GeneID" id="61189553"/>
<dbReference type="KEGG" id="lwe:lwe1677"/>
<dbReference type="eggNOG" id="COG2103">
    <property type="taxonomic scope" value="Bacteria"/>
</dbReference>
<dbReference type="HOGENOM" id="CLU_049049_1_1_9"/>
<dbReference type="OrthoDB" id="9813395at2"/>
<dbReference type="UniPathway" id="UPA00342"/>
<dbReference type="Proteomes" id="UP000000779">
    <property type="component" value="Chromosome"/>
</dbReference>
<dbReference type="GO" id="GO:0097367">
    <property type="term" value="F:carbohydrate derivative binding"/>
    <property type="evidence" value="ECO:0007669"/>
    <property type="project" value="InterPro"/>
</dbReference>
<dbReference type="GO" id="GO:0016835">
    <property type="term" value="F:carbon-oxygen lyase activity"/>
    <property type="evidence" value="ECO:0007669"/>
    <property type="project" value="UniProtKB-UniRule"/>
</dbReference>
<dbReference type="GO" id="GO:0016803">
    <property type="term" value="F:ether hydrolase activity"/>
    <property type="evidence" value="ECO:0007669"/>
    <property type="project" value="TreeGrafter"/>
</dbReference>
<dbReference type="GO" id="GO:0046348">
    <property type="term" value="P:amino sugar catabolic process"/>
    <property type="evidence" value="ECO:0007669"/>
    <property type="project" value="InterPro"/>
</dbReference>
<dbReference type="GO" id="GO:0097173">
    <property type="term" value="P:N-acetylmuramic acid catabolic process"/>
    <property type="evidence" value="ECO:0007669"/>
    <property type="project" value="UniProtKB-UniPathway"/>
</dbReference>
<dbReference type="GO" id="GO:0009254">
    <property type="term" value="P:peptidoglycan turnover"/>
    <property type="evidence" value="ECO:0007669"/>
    <property type="project" value="TreeGrafter"/>
</dbReference>
<dbReference type="CDD" id="cd05007">
    <property type="entry name" value="SIS_Etherase"/>
    <property type="match status" value="1"/>
</dbReference>
<dbReference type="FunFam" id="1.10.8.1080:FF:000001">
    <property type="entry name" value="N-acetylmuramic acid 6-phosphate etherase"/>
    <property type="match status" value="1"/>
</dbReference>
<dbReference type="FunFam" id="3.40.50.10490:FF:000014">
    <property type="entry name" value="N-acetylmuramic acid 6-phosphate etherase"/>
    <property type="match status" value="1"/>
</dbReference>
<dbReference type="Gene3D" id="1.10.8.1080">
    <property type="match status" value="1"/>
</dbReference>
<dbReference type="Gene3D" id="3.40.50.10490">
    <property type="entry name" value="Glucose-6-phosphate isomerase like protein, domain 1"/>
    <property type="match status" value="1"/>
</dbReference>
<dbReference type="HAMAP" id="MF_00068">
    <property type="entry name" value="MurQ"/>
    <property type="match status" value="1"/>
</dbReference>
<dbReference type="InterPro" id="IPR005488">
    <property type="entry name" value="Etherase_MurQ"/>
</dbReference>
<dbReference type="InterPro" id="IPR005486">
    <property type="entry name" value="Glucokinase_regulatory_CS"/>
</dbReference>
<dbReference type="InterPro" id="IPR040190">
    <property type="entry name" value="MURQ/GCKR"/>
</dbReference>
<dbReference type="InterPro" id="IPR001347">
    <property type="entry name" value="SIS_dom"/>
</dbReference>
<dbReference type="InterPro" id="IPR046348">
    <property type="entry name" value="SIS_dom_sf"/>
</dbReference>
<dbReference type="NCBIfam" id="TIGR00274">
    <property type="entry name" value="N-acetylmuramic acid 6-phosphate etherase"/>
    <property type="match status" value="1"/>
</dbReference>
<dbReference type="NCBIfam" id="NF003915">
    <property type="entry name" value="PRK05441.1"/>
    <property type="match status" value="1"/>
</dbReference>
<dbReference type="NCBIfam" id="NF009222">
    <property type="entry name" value="PRK12570.1"/>
    <property type="match status" value="1"/>
</dbReference>
<dbReference type="PANTHER" id="PTHR10088">
    <property type="entry name" value="GLUCOKINASE REGULATORY PROTEIN"/>
    <property type="match status" value="1"/>
</dbReference>
<dbReference type="PANTHER" id="PTHR10088:SF4">
    <property type="entry name" value="GLUCOKINASE REGULATORY PROTEIN"/>
    <property type="match status" value="1"/>
</dbReference>
<dbReference type="Pfam" id="PF22645">
    <property type="entry name" value="GKRP_SIS_N"/>
    <property type="match status" value="1"/>
</dbReference>
<dbReference type="SUPFAM" id="SSF53697">
    <property type="entry name" value="SIS domain"/>
    <property type="match status" value="1"/>
</dbReference>
<dbReference type="PROSITE" id="PS01272">
    <property type="entry name" value="GCKR"/>
    <property type="match status" value="1"/>
</dbReference>
<dbReference type="PROSITE" id="PS51464">
    <property type="entry name" value="SIS"/>
    <property type="match status" value="1"/>
</dbReference>
<name>MURQ_LISW6</name>
<organism>
    <name type="scientific">Listeria welshimeri serovar 6b (strain ATCC 35897 / DSM 20650 / CCUG 15529 / CIP 8149 / NCTC 11857 / SLCC 5334 / V8)</name>
    <dbReference type="NCBI Taxonomy" id="386043"/>
    <lineage>
        <taxon>Bacteria</taxon>
        <taxon>Bacillati</taxon>
        <taxon>Bacillota</taxon>
        <taxon>Bacilli</taxon>
        <taxon>Bacillales</taxon>
        <taxon>Listeriaceae</taxon>
        <taxon>Listeria</taxon>
    </lineage>
</organism>
<reference key="1">
    <citation type="journal article" date="2006" name="J. Bacteriol.">
        <title>Whole-genome sequence of Listeria welshimeri reveals common steps in genome reduction with Listeria innocua as compared to Listeria monocytogenes.</title>
        <authorList>
            <person name="Hain T."/>
            <person name="Steinweg C."/>
            <person name="Kuenne C.T."/>
            <person name="Billion A."/>
            <person name="Ghai R."/>
            <person name="Chatterjee S.S."/>
            <person name="Domann E."/>
            <person name="Kaerst U."/>
            <person name="Goesmann A."/>
            <person name="Bekel T."/>
            <person name="Bartels D."/>
            <person name="Kaiser O."/>
            <person name="Meyer F."/>
            <person name="Puehler A."/>
            <person name="Weisshaar B."/>
            <person name="Wehland J."/>
            <person name="Liang C."/>
            <person name="Dandekar T."/>
            <person name="Lampidis R."/>
            <person name="Kreft J."/>
            <person name="Goebel W."/>
            <person name="Chakraborty T."/>
        </authorList>
    </citation>
    <scope>NUCLEOTIDE SEQUENCE [LARGE SCALE GENOMIC DNA]</scope>
    <source>
        <strain>ATCC 35897 / DSM 20650 / CCUG 15529 / CIP 8149 / NCTC 11857 / SLCC 5334 / V8</strain>
    </source>
</reference>
<evidence type="ECO:0000255" key="1">
    <source>
        <dbReference type="HAMAP-Rule" id="MF_00068"/>
    </source>
</evidence>
<keyword id="KW-0119">Carbohydrate metabolism</keyword>
<keyword id="KW-0456">Lyase</keyword>
<protein>
    <recommendedName>
        <fullName evidence="1">N-acetylmuramic acid 6-phosphate etherase</fullName>
        <shortName evidence="1">MurNAc-6-P etherase</shortName>
        <ecNumber evidence="1">4.2.1.126</ecNumber>
    </recommendedName>
    <alternativeName>
        <fullName evidence="1">N-acetylmuramic acid 6-phosphate hydrolase</fullName>
    </alternativeName>
    <alternativeName>
        <fullName evidence="1">N-acetylmuramic acid 6-phosphate lyase</fullName>
    </alternativeName>
</protein>
<gene>
    <name evidence="1" type="primary">murQ</name>
    <name type="ordered locus">lwe1677</name>
</gene>
<feature type="chain" id="PRO_1000009124" description="N-acetylmuramic acid 6-phosphate etherase">
    <location>
        <begin position="1"/>
        <end position="296"/>
    </location>
</feature>
<feature type="domain" description="SIS" evidence="1">
    <location>
        <begin position="54"/>
        <end position="217"/>
    </location>
</feature>
<feature type="active site" description="Proton donor" evidence="1">
    <location>
        <position position="82"/>
    </location>
</feature>
<feature type="active site" evidence="1">
    <location>
        <position position="113"/>
    </location>
</feature>